<name>ATPB_PSECP</name>
<reference key="1">
    <citation type="submission" date="2009-01" db="EMBL/GenBank/DDBJ databases">
        <title>Complete sequence of chromosome of Arthrobacter chlorophenolicus A6.</title>
        <authorList>
            <consortium name="US DOE Joint Genome Institute"/>
            <person name="Lucas S."/>
            <person name="Copeland A."/>
            <person name="Lapidus A."/>
            <person name="Glavina del Rio T."/>
            <person name="Tice H."/>
            <person name="Bruce D."/>
            <person name="Goodwin L."/>
            <person name="Pitluck S."/>
            <person name="Goltsman E."/>
            <person name="Clum A."/>
            <person name="Larimer F."/>
            <person name="Land M."/>
            <person name="Hauser L."/>
            <person name="Kyrpides N."/>
            <person name="Mikhailova N."/>
            <person name="Jansson J."/>
            <person name="Richardson P."/>
        </authorList>
    </citation>
    <scope>NUCLEOTIDE SEQUENCE [LARGE SCALE GENOMIC DNA]</scope>
    <source>
        <strain>ATCC 700700 / DSM 12829 / CIP 107037 / JCM 12360 / KCTC 9906 / NCIMB 13794 / A6</strain>
    </source>
</reference>
<organism>
    <name type="scientific">Pseudarthrobacter chlorophenolicus (strain ATCC 700700 / DSM 12829 / CIP 107037 / JCM 12360 / KCTC 9906 / NCIMB 13794 / A6)</name>
    <name type="common">Arthrobacter chlorophenolicus</name>
    <dbReference type="NCBI Taxonomy" id="452863"/>
    <lineage>
        <taxon>Bacteria</taxon>
        <taxon>Bacillati</taxon>
        <taxon>Actinomycetota</taxon>
        <taxon>Actinomycetes</taxon>
        <taxon>Micrococcales</taxon>
        <taxon>Micrococcaceae</taxon>
        <taxon>Pseudarthrobacter</taxon>
    </lineage>
</organism>
<proteinExistence type="inferred from homology"/>
<protein>
    <recommendedName>
        <fullName evidence="1">ATP synthase subunit beta</fullName>
        <ecNumber evidence="1">7.1.2.2</ecNumber>
    </recommendedName>
    <alternativeName>
        <fullName evidence="1">ATP synthase F1 sector subunit beta</fullName>
    </alternativeName>
    <alternativeName>
        <fullName evidence="1">F-ATPase subunit beta</fullName>
    </alternativeName>
</protein>
<sequence>MTATATEHVAATSGATGRIARVIGPVVDVEFPADAIPSIYNALTTEITLNGETKTITFETSQHLGDNLVRAISLQATDGLVRGTSVVDSGAPISVPVGDGVKGHIFNVLGQPLDVTESELDISERWPIHRKAPAFASLEGSTEMLETGIKVIDLLTPYIKGGKIGLFGGAGVGKTVLIQEMITRVARNFGGTSVFAGVGERTREGNDLWVEMEEAGVLKDTALVFGQMDEPPGTRLRVALSALTMAEYFRDVQNQDVLLFIDNIFRFTQAGSEVSTLLGRMPSAVGYQPNLADEMGLLQERITSTKGHSITSMQAIYVPADDYTDPAPATTFAHLDATTELSREIASRGLYPAVDPLTSTSRILDPQYIGKDHYNTAVRVKQILQKNKELQDIIAILGVDELSEEDKIVVSRARRIQQFLSQNTYTAKQFTGVEGSTVSIKDTVEGFTAICDGELDHIAEQAFFNVGGLDDVERQWAKIQEQTK</sequence>
<evidence type="ECO:0000255" key="1">
    <source>
        <dbReference type="HAMAP-Rule" id="MF_01347"/>
    </source>
</evidence>
<dbReference type="EC" id="7.1.2.2" evidence="1"/>
<dbReference type="EMBL" id="CP001341">
    <property type="protein sequence ID" value="ACL40303.1"/>
    <property type="molecule type" value="Genomic_DNA"/>
</dbReference>
<dbReference type="RefSeq" id="WP_015937516.1">
    <property type="nucleotide sequence ID" value="NC_011886.1"/>
</dbReference>
<dbReference type="SMR" id="B8HAY9"/>
<dbReference type="STRING" id="452863.Achl_2338"/>
<dbReference type="KEGG" id="ach:Achl_2338"/>
<dbReference type="eggNOG" id="COG0055">
    <property type="taxonomic scope" value="Bacteria"/>
</dbReference>
<dbReference type="HOGENOM" id="CLU_022398_0_2_11"/>
<dbReference type="OrthoDB" id="9801639at2"/>
<dbReference type="Proteomes" id="UP000002505">
    <property type="component" value="Chromosome"/>
</dbReference>
<dbReference type="GO" id="GO:0005886">
    <property type="term" value="C:plasma membrane"/>
    <property type="evidence" value="ECO:0007669"/>
    <property type="project" value="UniProtKB-SubCell"/>
</dbReference>
<dbReference type="GO" id="GO:0045259">
    <property type="term" value="C:proton-transporting ATP synthase complex"/>
    <property type="evidence" value="ECO:0007669"/>
    <property type="project" value="UniProtKB-KW"/>
</dbReference>
<dbReference type="GO" id="GO:0005524">
    <property type="term" value="F:ATP binding"/>
    <property type="evidence" value="ECO:0007669"/>
    <property type="project" value="UniProtKB-UniRule"/>
</dbReference>
<dbReference type="GO" id="GO:0016887">
    <property type="term" value="F:ATP hydrolysis activity"/>
    <property type="evidence" value="ECO:0007669"/>
    <property type="project" value="InterPro"/>
</dbReference>
<dbReference type="GO" id="GO:0046933">
    <property type="term" value="F:proton-transporting ATP synthase activity, rotational mechanism"/>
    <property type="evidence" value="ECO:0007669"/>
    <property type="project" value="UniProtKB-UniRule"/>
</dbReference>
<dbReference type="CDD" id="cd18110">
    <property type="entry name" value="ATP-synt_F1_beta_C"/>
    <property type="match status" value="1"/>
</dbReference>
<dbReference type="CDD" id="cd18115">
    <property type="entry name" value="ATP-synt_F1_beta_N"/>
    <property type="match status" value="1"/>
</dbReference>
<dbReference type="CDD" id="cd01133">
    <property type="entry name" value="F1-ATPase_beta_CD"/>
    <property type="match status" value="1"/>
</dbReference>
<dbReference type="FunFam" id="1.10.1140.10:FF:000005">
    <property type="entry name" value="ATP synthase subunit beta"/>
    <property type="match status" value="1"/>
</dbReference>
<dbReference type="FunFam" id="2.40.10.170:FF:000005">
    <property type="entry name" value="ATP synthase subunit beta"/>
    <property type="match status" value="1"/>
</dbReference>
<dbReference type="FunFam" id="3.40.50.300:FF:000004">
    <property type="entry name" value="ATP synthase subunit beta"/>
    <property type="match status" value="1"/>
</dbReference>
<dbReference type="Gene3D" id="2.40.10.170">
    <property type="match status" value="1"/>
</dbReference>
<dbReference type="Gene3D" id="1.10.1140.10">
    <property type="entry name" value="Bovine Mitochondrial F1-atpase, Atp Synthase Beta Chain, Chain D, domain 3"/>
    <property type="match status" value="1"/>
</dbReference>
<dbReference type="Gene3D" id="3.40.50.300">
    <property type="entry name" value="P-loop containing nucleotide triphosphate hydrolases"/>
    <property type="match status" value="1"/>
</dbReference>
<dbReference type="HAMAP" id="MF_01347">
    <property type="entry name" value="ATP_synth_beta_bact"/>
    <property type="match status" value="1"/>
</dbReference>
<dbReference type="InterPro" id="IPR003593">
    <property type="entry name" value="AAA+_ATPase"/>
</dbReference>
<dbReference type="InterPro" id="IPR055190">
    <property type="entry name" value="ATP-synt_VA_C"/>
</dbReference>
<dbReference type="InterPro" id="IPR005722">
    <property type="entry name" value="ATP_synth_F1_bsu"/>
</dbReference>
<dbReference type="InterPro" id="IPR020003">
    <property type="entry name" value="ATPase_a/bsu_AS"/>
</dbReference>
<dbReference type="InterPro" id="IPR050053">
    <property type="entry name" value="ATPase_alpha/beta_chains"/>
</dbReference>
<dbReference type="InterPro" id="IPR004100">
    <property type="entry name" value="ATPase_F1/V1/A1_a/bsu_N"/>
</dbReference>
<dbReference type="InterPro" id="IPR036121">
    <property type="entry name" value="ATPase_F1/V1/A1_a/bsu_N_sf"/>
</dbReference>
<dbReference type="InterPro" id="IPR000194">
    <property type="entry name" value="ATPase_F1/V1/A1_a/bsu_nucl-bd"/>
</dbReference>
<dbReference type="InterPro" id="IPR024034">
    <property type="entry name" value="ATPase_F1/V1_b/a_C"/>
</dbReference>
<dbReference type="InterPro" id="IPR027417">
    <property type="entry name" value="P-loop_NTPase"/>
</dbReference>
<dbReference type="NCBIfam" id="TIGR01039">
    <property type="entry name" value="atpD"/>
    <property type="match status" value="1"/>
</dbReference>
<dbReference type="PANTHER" id="PTHR15184">
    <property type="entry name" value="ATP SYNTHASE"/>
    <property type="match status" value="1"/>
</dbReference>
<dbReference type="PANTHER" id="PTHR15184:SF71">
    <property type="entry name" value="ATP SYNTHASE SUBUNIT BETA, MITOCHONDRIAL"/>
    <property type="match status" value="1"/>
</dbReference>
<dbReference type="Pfam" id="PF00006">
    <property type="entry name" value="ATP-synt_ab"/>
    <property type="match status" value="1"/>
</dbReference>
<dbReference type="Pfam" id="PF02874">
    <property type="entry name" value="ATP-synt_ab_N"/>
    <property type="match status" value="1"/>
</dbReference>
<dbReference type="Pfam" id="PF22919">
    <property type="entry name" value="ATP-synt_VA_C"/>
    <property type="match status" value="1"/>
</dbReference>
<dbReference type="SMART" id="SM00382">
    <property type="entry name" value="AAA"/>
    <property type="match status" value="1"/>
</dbReference>
<dbReference type="SUPFAM" id="SSF47917">
    <property type="entry name" value="C-terminal domain of alpha and beta subunits of F1 ATP synthase"/>
    <property type="match status" value="1"/>
</dbReference>
<dbReference type="SUPFAM" id="SSF50615">
    <property type="entry name" value="N-terminal domain of alpha and beta subunits of F1 ATP synthase"/>
    <property type="match status" value="1"/>
</dbReference>
<dbReference type="SUPFAM" id="SSF52540">
    <property type="entry name" value="P-loop containing nucleoside triphosphate hydrolases"/>
    <property type="match status" value="1"/>
</dbReference>
<dbReference type="PROSITE" id="PS00152">
    <property type="entry name" value="ATPASE_ALPHA_BETA"/>
    <property type="match status" value="1"/>
</dbReference>
<gene>
    <name evidence="1" type="primary">atpD</name>
    <name type="ordered locus">Achl_2338</name>
</gene>
<comment type="function">
    <text evidence="1">Produces ATP from ADP in the presence of a proton gradient across the membrane. The catalytic sites are hosted primarily by the beta subunits.</text>
</comment>
<comment type="catalytic activity">
    <reaction evidence="1">
        <text>ATP + H2O + 4 H(+)(in) = ADP + phosphate + 5 H(+)(out)</text>
        <dbReference type="Rhea" id="RHEA:57720"/>
        <dbReference type="ChEBI" id="CHEBI:15377"/>
        <dbReference type="ChEBI" id="CHEBI:15378"/>
        <dbReference type="ChEBI" id="CHEBI:30616"/>
        <dbReference type="ChEBI" id="CHEBI:43474"/>
        <dbReference type="ChEBI" id="CHEBI:456216"/>
        <dbReference type="EC" id="7.1.2.2"/>
    </reaction>
</comment>
<comment type="subunit">
    <text evidence="1">F-type ATPases have 2 components, CF(1) - the catalytic core - and CF(0) - the membrane proton channel. CF(1) has five subunits: alpha(3), beta(3), gamma(1), delta(1), epsilon(1). CF(0) has three main subunits: a(1), b(2) and c(9-12). The alpha and beta chains form an alternating ring which encloses part of the gamma chain. CF(1) is attached to CF(0) by a central stalk formed by the gamma and epsilon chains, while a peripheral stalk is formed by the delta and b chains.</text>
</comment>
<comment type="subcellular location">
    <subcellularLocation>
        <location evidence="1">Cell membrane</location>
        <topology evidence="1">Peripheral membrane protein</topology>
    </subcellularLocation>
</comment>
<comment type="similarity">
    <text evidence="1">Belongs to the ATPase alpha/beta chains family.</text>
</comment>
<feature type="chain" id="PRO_1000166567" description="ATP synthase subunit beta">
    <location>
        <begin position="1"/>
        <end position="484"/>
    </location>
</feature>
<feature type="binding site" evidence="1">
    <location>
        <begin position="168"/>
        <end position="175"/>
    </location>
    <ligand>
        <name>ATP</name>
        <dbReference type="ChEBI" id="CHEBI:30616"/>
    </ligand>
</feature>
<accession>B8HAY9</accession>
<keyword id="KW-0066">ATP synthesis</keyword>
<keyword id="KW-0067">ATP-binding</keyword>
<keyword id="KW-1003">Cell membrane</keyword>
<keyword id="KW-0139">CF(1)</keyword>
<keyword id="KW-0375">Hydrogen ion transport</keyword>
<keyword id="KW-0406">Ion transport</keyword>
<keyword id="KW-0472">Membrane</keyword>
<keyword id="KW-0547">Nucleotide-binding</keyword>
<keyword id="KW-1278">Translocase</keyword>
<keyword id="KW-0813">Transport</keyword>